<name>SEPF_ALKMQ</name>
<proteinExistence type="inferred from homology"/>
<protein>
    <recommendedName>
        <fullName evidence="1">Cell division protein SepF</fullName>
    </recommendedName>
</protein>
<keyword id="KW-0131">Cell cycle</keyword>
<keyword id="KW-0132">Cell division</keyword>
<keyword id="KW-0963">Cytoplasm</keyword>
<keyword id="KW-1185">Reference proteome</keyword>
<keyword id="KW-0717">Septation</keyword>
<dbReference type="EMBL" id="CP000724">
    <property type="protein sequence ID" value="ABR48953.1"/>
    <property type="molecule type" value="Genomic_DNA"/>
</dbReference>
<dbReference type="RefSeq" id="WP_012063924.1">
    <property type="nucleotide sequence ID" value="NC_009633.1"/>
</dbReference>
<dbReference type="SMR" id="A6TRY5"/>
<dbReference type="STRING" id="293826.Amet_2803"/>
<dbReference type="KEGG" id="amt:Amet_2803"/>
<dbReference type="eggNOG" id="COG1799">
    <property type="taxonomic scope" value="Bacteria"/>
</dbReference>
<dbReference type="HOGENOM" id="CLU_078499_4_0_9"/>
<dbReference type="OrthoDB" id="9815206at2"/>
<dbReference type="Proteomes" id="UP000001572">
    <property type="component" value="Chromosome"/>
</dbReference>
<dbReference type="GO" id="GO:0005737">
    <property type="term" value="C:cytoplasm"/>
    <property type="evidence" value="ECO:0007669"/>
    <property type="project" value="UniProtKB-SubCell"/>
</dbReference>
<dbReference type="GO" id="GO:0000917">
    <property type="term" value="P:division septum assembly"/>
    <property type="evidence" value="ECO:0007669"/>
    <property type="project" value="UniProtKB-KW"/>
</dbReference>
<dbReference type="GO" id="GO:0043093">
    <property type="term" value="P:FtsZ-dependent cytokinesis"/>
    <property type="evidence" value="ECO:0007669"/>
    <property type="project" value="UniProtKB-UniRule"/>
</dbReference>
<dbReference type="Gene3D" id="3.30.110.150">
    <property type="entry name" value="SepF-like protein"/>
    <property type="match status" value="1"/>
</dbReference>
<dbReference type="HAMAP" id="MF_01197">
    <property type="entry name" value="SepF"/>
    <property type="match status" value="1"/>
</dbReference>
<dbReference type="InterPro" id="IPR023052">
    <property type="entry name" value="Cell_div_SepF"/>
</dbReference>
<dbReference type="InterPro" id="IPR007561">
    <property type="entry name" value="Cell_div_SepF/SepF-rel"/>
</dbReference>
<dbReference type="InterPro" id="IPR038594">
    <property type="entry name" value="SepF-like_sf"/>
</dbReference>
<dbReference type="PANTHER" id="PTHR35798">
    <property type="entry name" value="CELL DIVISION PROTEIN SEPF"/>
    <property type="match status" value="1"/>
</dbReference>
<dbReference type="PANTHER" id="PTHR35798:SF1">
    <property type="entry name" value="CELL DIVISION PROTEIN SEPF"/>
    <property type="match status" value="1"/>
</dbReference>
<dbReference type="Pfam" id="PF04472">
    <property type="entry name" value="SepF"/>
    <property type="match status" value="1"/>
</dbReference>
<evidence type="ECO:0000255" key="1">
    <source>
        <dbReference type="HAMAP-Rule" id="MF_01197"/>
    </source>
</evidence>
<feature type="chain" id="PRO_0000333968" description="Cell division protein SepF">
    <location>
        <begin position="1"/>
        <end position="148"/>
    </location>
</feature>
<reference key="1">
    <citation type="journal article" date="2016" name="Genome Announc.">
        <title>Complete genome sequence of Alkaliphilus metalliredigens strain QYMF, an alkaliphilic and metal-reducing bacterium isolated from borax-contaminated leachate ponds.</title>
        <authorList>
            <person name="Hwang C."/>
            <person name="Copeland A."/>
            <person name="Lucas S."/>
            <person name="Lapidus A."/>
            <person name="Barry K."/>
            <person name="Detter J.C."/>
            <person name="Glavina Del Rio T."/>
            <person name="Hammon N."/>
            <person name="Israni S."/>
            <person name="Dalin E."/>
            <person name="Tice H."/>
            <person name="Pitluck S."/>
            <person name="Chertkov O."/>
            <person name="Brettin T."/>
            <person name="Bruce D."/>
            <person name="Han C."/>
            <person name="Schmutz J."/>
            <person name="Larimer F."/>
            <person name="Land M.L."/>
            <person name="Hauser L."/>
            <person name="Kyrpides N."/>
            <person name="Mikhailova N."/>
            <person name="Ye Q."/>
            <person name="Zhou J."/>
            <person name="Richardson P."/>
            <person name="Fields M.W."/>
        </authorList>
    </citation>
    <scope>NUCLEOTIDE SEQUENCE [LARGE SCALE GENOMIC DNA]</scope>
    <source>
        <strain>QYMF</strain>
    </source>
</reference>
<gene>
    <name evidence="1" type="primary">sepF</name>
    <name type="ordered locus">Amet_2803</name>
</gene>
<sequence length="148" mass="16641">MSAKFIDKVKYFIGLDAFEDDNEDMLEEADGMDDEMIPISSTSKKNKILNIHTTTQMKVVIFEPSSFEEAPGIVDNLKNRKPVIINLENIEPDLAKKFFDFLNGAIYALDGNIQKVASGIFILAPNNVDISGNIKEELKNKGVFPWQK</sequence>
<organism>
    <name type="scientific">Alkaliphilus metalliredigens (strain QYMF)</name>
    <dbReference type="NCBI Taxonomy" id="293826"/>
    <lineage>
        <taxon>Bacteria</taxon>
        <taxon>Bacillati</taxon>
        <taxon>Bacillota</taxon>
        <taxon>Clostridia</taxon>
        <taxon>Peptostreptococcales</taxon>
        <taxon>Natronincolaceae</taxon>
        <taxon>Alkaliphilus</taxon>
    </lineage>
</organism>
<accession>A6TRY5</accession>
<comment type="function">
    <text evidence="1">Cell division protein that is part of the divisome complex and is recruited early to the Z-ring. Probably stimulates Z-ring formation, perhaps through the cross-linking of FtsZ protofilaments. Its function overlaps with FtsA.</text>
</comment>
<comment type="subunit">
    <text evidence="1">Homodimer. Interacts with FtsZ.</text>
</comment>
<comment type="subcellular location">
    <subcellularLocation>
        <location evidence="1">Cytoplasm</location>
    </subcellularLocation>
    <text evidence="1">Localizes to the division site, in a FtsZ-dependent manner.</text>
</comment>
<comment type="similarity">
    <text evidence="1">Belongs to the SepF family.</text>
</comment>